<name>JANO_PENJA</name>
<protein>
    <recommendedName>
        <fullName evidence="3">FAD-linked oxidoreductase janO</fullName>
        <ecNumber evidence="5">1.1.1.-</ecNumber>
    </recommendedName>
    <alternativeName>
        <fullName evidence="3">Janthitremanes biosynthesis cluster protein O</fullName>
    </alternativeName>
</protein>
<keyword id="KW-0274">FAD</keyword>
<keyword id="KW-0285">Flavoprotein</keyword>
<keyword id="KW-0560">Oxidoreductase</keyword>
<feature type="chain" id="PRO_0000446568" description="FAD-linked oxidoreductase janO">
    <location>
        <begin position="1"/>
        <end position="449"/>
    </location>
</feature>
<feature type="domain" description="FAD-binding PCMH-type" evidence="1">
    <location>
        <begin position="32"/>
        <end position="203"/>
    </location>
</feature>
<evidence type="ECO:0000255" key="1">
    <source>
        <dbReference type="PROSITE-ProRule" id="PRU00718"/>
    </source>
</evidence>
<evidence type="ECO:0000269" key="2">
    <source>
    </source>
</evidence>
<evidence type="ECO:0000303" key="3">
    <source>
    </source>
</evidence>
<evidence type="ECO:0000305" key="4"/>
<evidence type="ECO:0000305" key="5">
    <source>
    </source>
</evidence>
<proteinExistence type="inferred from homology"/>
<gene>
    <name evidence="3" type="primary">janO</name>
</gene>
<accession>A0A0E3D8N0</accession>
<comment type="function">
    <text evidence="2 5">FAD-linked oxidoreductase; part of the gene cluster that mediates the biosynthesis of the indole diterpenes janthitremanes such as shearinine K or shearinine A (PubMed:26213965). The geranylgeranyl diphosphate (GGPP) synthase janG catalyzes the first step in janthitremane biosynthesis via conversion of farnesyl pyrophosphate and isopentyl pyrophosphate into geranylgeranyl pyrophosphate (GGPP) (PubMed:26213965). Condensation of indole-3-glycerol phosphate with GGPP by the prenyl transferase janC then forms 3-geranylgeranylindole (3-GGI) (PubMed:26213965). Epoxidation by the FAD-dependent monooxygenase janM leads to a epoxidized-GGI that is substrate of the terpene cyclase janB for cyclization to yield paspaline (PubMed:26213965). Paspaline is subsequently converted to 13-desoxypaspaline by the cytochrome P450 monooxygenase janP, via beta-PC-M6 in a series of alpha-face oxidations (Probable). The cytochrome P450 monooxygenase janQ is proposed to carry out sequential beta-face oxidation steps at C-7 and C-13 of 13-desoxypaspaline to form paspalicine and paspalinine respectively (Probable). The indole diterpene prenyltransferase janD may then convert paspalinine into shearinine K which is substrate of janO and/or additional enzymes for oxidation and cyclization to generate shearinine A (Probable).</text>
</comment>
<comment type="cofactor">
    <cofactor evidence="4">
        <name>FAD</name>
        <dbReference type="ChEBI" id="CHEBI:57692"/>
    </cofactor>
</comment>
<comment type="pathway">
    <text evidence="5">Secondary metabolite biosynthesis.</text>
</comment>
<comment type="similarity">
    <text evidence="4">Belongs to the oxygen-dependent FAD-linked oxidoreductase family.</text>
</comment>
<sequence>MTIPELPILWRDNAPPSEYEAWRSRTFNSKRPDAQPLAIIKPTTIDHIVSATALAKENNAKLALRSGGHSLQCWSLRKDSILVDLENFRYLEFDDATGVVSVTPSVTSSELLLFLANKKRFFPSGHSGEVGLGGFLLQGGIGLNARSYGYACEYLTAVDVVTVSGEVKHCSPDENADLFWAARGAGPEFPAIVTRFHLNTRPLLPTVKRCTYIWPAVCYEMVFKWVLEILPTLSDDIEPTIFGFTLPNTPIPVIAFHAHVHAESDESAIELLKPLHESHPAGAMVEQDCVDTSVQQEFESGHAIMPPGARYFTDSVFLTPGTDIIEACREMFTTLPAQAAGSIAYWEPMKQRTKLPEMAWSIHSEHYVSLMAIYGDQNQDHKQQTWILDCFKDMDRKGLLLGTYVGDAHPKDRPHHYWSDPAKERIQKIGVQWDPEARLRGTIFAENTL</sequence>
<organism>
    <name type="scientific">Penicillium janthinellum</name>
    <name type="common">Penicillium vitale</name>
    <dbReference type="NCBI Taxonomy" id="5079"/>
    <lineage>
        <taxon>Eukaryota</taxon>
        <taxon>Fungi</taxon>
        <taxon>Dikarya</taxon>
        <taxon>Ascomycota</taxon>
        <taxon>Pezizomycotina</taxon>
        <taxon>Eurotiomycetes</taxon>
        <taxon>Eurotiomycetidae</taxon>
        <taxon>Eurotiales</taxon>
        <taxon>Aspergillaceae</taxon>
        <taxon>Penicillium</taxon>
    </lineage>
</organism>
<reference key="1">
    <citation type="journal article" date="2015" name="Toxins">
        <title>Molecular cloning and functional analysis of gene clusters for the biosynthesis of indole-diterpenes in Penicillium crustosum and P. janthinellum.</title>
        <authorList>
            <person name="Nicholson M.J."/>
            <person name="Eaton C.J."/>
            <person name="Starkel C."/>
            <person name="Tapper B.A."/>
            <person name="Cox M.P."/>
            <person name="Scott B."/>
        </authorList>
    </citation>
    <scope>NUCLEOTIDE SEQUENCE [GENOMIC DNA]</scope>
    <scope>IDENTIFICATION</scope>
    <scope>FUNCTION</scope>
    <scope>PATHWAY</scope>
    <source>
        <strain>PN2408</strain>
    </source>
</reference>
<dbReference type="EC" id="1.1.1.-" evidence="5"/>
<dbReference type="EMBL" id="KF280651">
    <property type="protein sequence ID" value="AGZ20488.1"/>
    <property type="molecule type" value="Genomic_DNA"/>
</dbReference>
<dbReference type="SMR" id="A0A0E3D8N0"/>
<dbReference type="GO" id="GO:0071949">
    <property type="term" value="F:FAD binding"/>
    <property type="evidence" value="ECO:0007669"/>
    <property type="project" value="InterPro"/>
</dbReference>
<dbReference type="GO" id="GO:0016491">
    <property type="term" value="F:oxidoreductase activity"/>
    <property type="evidence" value="ECO:0007669"/>
    <property type="project" value="UniProtKB-KW"/>
</dbReference>
<dbReference type="Gene3D" id="3.30.465.10">
    <property type="match status" value="1"/>
</dbReference>
<dbReference type="Gene3D" id="3.40.462.20">
    <property type="match status" value="1"/>
</dbReference>
<dbReference type="Gene3D" id="3.30.43.10">
    <property type="entry name" value="Uridine Diphospho-n-acetylenolpyruvylglucosamine Reductase, domain 2"/>
    <property type="match status" value="1"/>
</dbReference>
<dbReference type="InterPro" id="IPR016166">
    <property type="entry name" value="FAD-bd_PCMH"/>
</dbReference>
<dbReference type="InterPro" id="IPR036318">
    <property type="entry name" value="FAD-bd_PCMH-like_sf"/>
</dbReference>
<dbReference type="InterPro" id="IPR016167">
    <property type="entry name" value="FAD-bd_PCMH_sub1"/>
</dbReference>
<dbReference type="InterPro" id="IPR016169">
    <property type="entry name" value="FAD-bd_PCMH_sub2"/>
</dbReference>
<dbReference type="InterPro" id="IPR050416">
    <property type="entry name" value="FAD-linked_Oxidoreductase"/>
</dbReference>
<dbReference type="InterPro" id="IPR006094">
    <property type="entry name" value="Oxid_FAD_bind_N"/>
</dbReference>
<dbReference type="PANTHER" id="PTHR42973">
    <property type="entry name" value="BINDING OXIDOREDUCTASE, PUTATIVE (AFU_ORTHOLOGUE AFUA_1G17690)-RELATED"/>
    <property type="match status" value="1"/>
</dbReference>
<dbReference type="PANTHER" id="PTHR42973:SF39">
    <property type="entry name" value="FAD-BINDING PCMH-TYPE DOMAIN-CONTAINING PROTEIN"/>
    <property type="match status" value="1"/>
</dbReference>
<dbReference type="Pfam" id="PF01565">
    <property type="entry name" value="FAD_binding_4"/>
    <property type="match status" value="1"/>
</dbReference>
<dbReference type="SUPFAM" id="SSF56176">
    <property type="entry name" value="FAD-binding/transporter-associated domain-like"/>
    <property type="match status" value="1"/>
</dbReference>
<dbReference type="PROSITE" id="PS51387">
    <property type="entry name" value="FAD_PCMH"/>
    <property type="match status" value="1"/>
</dbReference>